<dbReference type="EMBL" id="AB037949">
    <property type="protein sequence ID" value="BAB68381.1"/>
    <property type="molecule type" value="Genomic_RNA"/>
</dbReference>
<dbReference type="Proteomes" id="UP000008114">
    <property type="component" value="Genome"/>
</dbReference>
<dbReference type="GO" id="GO:0043657">
    <property type="term" value="C:host cell"/>
    <property type="evidence" value="ECO:0007669"/>
    <property type="project" value="GOC"/>
</dbReference>
<dbReference type="GO" id="GO:0042025">
    <property type="term" value="C:host cell nucleus"/>
    <property type="evidence" value="ECO:0007669"/>
    <property type="project" value="UniProtKB-SubCell"/>
</dbReference>
<dbReference type="GO" id="GO:0044423">
    <property type="term" value="C:virion component"/>
    <property type="evidence" value="ECO:0007669"/>
    <property type="project" value="UniProtKB-KW"/>
</dbReference>
<dbReference type="GO" id="GO:0003723">
    <property type="term" value="F:RNA binding"/>
    <property type="evidence" value="ECO:0007669"/>
    <property type="project" value="UniProtKB-KW"/>
</dbReference>
<dbReference type="GO" id="GO:0046718">
    <property type="term" value="P:symbiont entry into host cell"/>
    <property type="evidence" value="ECO:0007669"/>
    <property type="project" value="UniProtKB-KW"/>
</dbReference>
<dbReference type="GO" id="GO:0075732">
    <property type="term" value="P:viral penetration into host nucleus"/>
    <property type="evidence" value="ECO:0007669"/>
    <property type="project" value="UniProtKB-KW"/>
</dbReference>
<dbReference type="Gene3D" id="4.10.220.40">
    <property type="entry name" value="Delta antigen, N-terminal"/>
    <property type="match status" value="1"/>
</dbReference>
<dbReference type="InterPro" id="IPR027403">
    <property type="entry name" value="Delta_antigen_N"/>
</dbReference>
<dbReference type="InterPro" id="IPR037517">
    <property type="entry name" value="HDAG_dom"/>
</dbReference>
<dbReference type="InterPro" id="IPR002506">
    <property type="entry name" value="HDV_ag"/>
</dbReference>
<dbReference type="Pfam" id="PF01517">
    <property type="entry name" value="HDV_ag"/>
    <property type="match status" value="1"/>
</dbReference>
<dbReference type="SUPFAM" id="SSF58108">
    <property type="entry name" value="Oligomerization domain of hepatitis delta antigen"/>
    <property type="match status" value="1"/>
</dbReference>
<dbReference type="PROSITE" id="PS51838">
    <property type="entry name" value="HDAG"/>
    <property type="match status" value="1"/>
</dbReference>
<evidence type="ECO:0000250" key="1"/>
<evidence type="ECO:0000250" key="2">
    <source>
        <dbReference type="UniProtKB" id="P0C6L3"/>
    </source>
</evidence>
<evidence type="ECO:0000255" key="3"/>
<evidence type="ECO:0000255" key="4">
    <source>
        <dbReference type="PROSITE-ProRule" id="PRU01183"/>
    </source>
</evidence>
<evidence type="ECO:0000256" key="5">
    <source>
        <dbReference type="SAM" id="MobiDB-lite"/>
    </source>
</evidence>
<evidence type="ECO:0000269" key="6">
    <source>
    </source>
</evidence>
<evidence type="ECO:0000305" key="7"/>
<reference key="1">
    <citation type="journal article" date="2001" name="J. Gen. Virol.">
        <title>Characterization of hepatitis D virus genotype III among Yucpa Indians in Venezuela.</title>
        <authorList>
            <person name="Nakano T."/>
            <person name="Shapiro C.N."/>
            <person name="Hadler S.C."/>
            <person name="Casey J.L."/>
            <person name="Mizokami M."/>
            <person name="Orito E."/>
            <person name="Robertson B.H."/>
        </authorList>
    </citation>
    <scope>NUCLEOTIDE SEQUENCE [GENOMIC RNA]</scope>
    <scope>RNA EDITING</scope>
</reference>
<reference key="2">
    <citation type="journal article" date="2005" name="Acta Virol.">
        <title>Hepatitis D.</title>
        <authorList>
            <person name="Husa P."/>
            <person name="Linhartova A."/>
            <person name="Nemecek V."/>
            <person name="Husova L."/>
        </authorList>
    </citation>
    <scope>REVIEW</scope>
</reference>
<reference key="3">
    <citation type="journal article" date="2006" name="Curr. Top. Microbiol. Immunol.">
        <title>Post-translational modification of delta antigen of hepatitis D virus.</title>
        <authorList>
            <person name="Huang W.H."/>
            <person name="Chen C.W."/>
            <person name="Wu H.L."/>
            <person name="Chen P.J."/>
        </authorList>
    </citation>
    <scope>REVIEW</scope>
</reference>
<protein>
    <recommendedName>
        <fullName>Small delta antigen</fullName>
        <shortName>S-HDAg</shortName>
    </recommendedName>
    <alternativeName>
        <fullName>p24</fullName>
    </alternativeName>
</protein>
<organismHost>
    <name type="scientific">Homo sapiens</name>
    <name type="common">Human</name>
    <dbReference type="NCBI Taxonomy" id="9606"/>
</organismHost>
<organism>
    <name type="scientific">Hepatitis delta virus genotype III (isolate VnzD8624)</name>
    <name type="common">HDV</name>
    <dbReference type="NCBI Taxonomy" id="261993"/>
    <lineage>
        <taxon>Viruses</taxon>
        <taxon>Ribozyviria</taxon>
        <taxon>Kolmioviridae</taxon>
        <taxon>Deltavirus</taxon>
        <taxon>Hepatitis delta virus</taxon>
    </lineage>
</organism>
<feature type="chain" id="PRO_0000038157" description="Small delta antigen">
    <location>
        <begin position="1"/>
        <end position="194"/>
    </location>
</feature>
<feature type="domain" description="HDAg" evidence="4">
    <location>
        <begin position="20"/>
        <end position="194"/>
    </location>
</feature>
<feature type="region of interest" description="Dimerization" evidence="3">
    <location>
        <begin position="12"/>
        <end position="59"/>
    </location>
</feature>
<feature type="region of interest" description="Disordered" evidence="5">
    <location>
        <begin position="57"/>
        <end position="194"/>
    </location>
</feature>
<feature type="region of interest" description="RNA-binding" evidence="4">
    <location>
        <begin position="96"/>
        <end position="106"/>
    </location>
</feature>
<feature type="region of interest" description="RNAPII-binding" evidence="4">
    <location>
        <begin position="129"/>
        <end position="194"/>
    </location>
</feature>
<feature type="region of interest" description="RNA-binding" evidence="4">
    <location>
        <begin position="135"/>
        <end position="145"/>
    </location>
</feature>
<feature type="short sequence motif" description="Nuclear localization signal" evidence="2">
    <location>
        <begin position="65"/>
        <end position="74"/>
    </location>
</feature>
<feature type="compositionally biased region" description="Basic and acidic residues" evidence="5">
    <location>
        <begin position="128"/>
        <end position="143"/>
    </location>
</feature>
<feature type="modified residue" description="Phosphoserine; by host CK2" evidence="2">
    <location>
        <position position="2"/>
    </location>
</feature>
<feature type="modified residue" description="Omega-N-methylated arginine; by host PRMT1" evidence="2">
    <location>
        <position position="13"/>
    </location>
</feature>
<feature type="modified residue" description="N6-acetyllysine; by host" evidence="2">
    <location>
        <position position="71"/>
    </location>
</feature>
<feature type="modified residue" description="Phosphoserine; by host" evidence="2">
    <location>
        <position position="122"/>
    </location>
</feature>
<feature type="modified residue" description="Phosphoserine; by host MAPK1 and MAPK3" evidence="2">
    <location>
        <position position="176"/>
    </location>
</feature>
<feature type="modified residue" description="Phosphothreonine; by host" evidence="2">
    <location>
        <position position="181"/>
    </location>
</feature>
<sequence length="194" mass="22082">MSQPGARPGSKXREEALEQWVEERKKKRIAEKELRRINKKIKKLEDENPWLGNIVGLLRRKKDEEGGPPAKRPRREDMEIDSTPGRKSKTRGFTDQERRDHRRRKALENKKKQLAGGGKNLSREEEEELRRLARDDDERERRVAGPRPGGVNPMDGPPRGAPGGGFVPSLQGVPESPFSRTGEGIDIRGTQQFP</sequence>
<accession>Q91DH7</accession>
<name>SHDAG_HDVV1</name>
<keyword id="KW-0007">Acetylation</keyword>
<keyword id="KW-1048">Host nucleus</keyword>
<keyword id="KW-0945">Host-virus interaction</keyword>
<keyword id="KW-0488">Methylation</keyword>
<keyword id="KW-0597">Phosphoprotein</keyword>
<keyword id="KW-0691">RNA editing</keyword>
<keyword id="KW-0694">RNA-binding</keyword>
<keyword id="KW-1163">Viral penetration into host nucleus</keyword>
<keyword id="KW-0946">Virion</keyword>
<keyword id="KW-1160">Virus entry into host cell</keyword>
<comment type="function">
    <text evidence="1">Promotes both transcription and replication of genomic RNA. Following virus entry into host cell, provides nuclear import of HDV RNPs thanks to its nuclear localization signal. May interact with host RNA polymerase II thereby changing its template requirement from DNA to RNA. RNA pol II complex would then acts as an RNA-directed RNA polymerase, and transcribe and replicate HDV genome (By similarity).</text>
</comment>
<comment type="subunit">
    <text evidence="1">Homodimer. Homooctamer. Interacts with host RNA polymerase II complex, and with host NPM1.</text>
</comment>
<comment type="subcellular location">
    <subcellularLocation>
        <location>Virion</location>
    </subcellularLocation>
    <subcellularLocation>
        <location evidence="1">Host nucleus</location>
    </subcellularLocation>
</comment>
<comment type="PTM">
    <text evidence="1">Phosphorylated at serines and threonines by host MAPK1/3, PKR, and CK2.</text>
</comment>
<comment type="PTM">
    <text evidence="1">Acetylation modulates nuclear localization. Neo-synthesized genomic RNA migrates from the nucleus to the cytoplasm, where they interact with S-HDAg, which once acetylated redirect both partners to the nucleus (By similarity).</text>
</comment>
<comment type="PTM">
    <text evidence="1">Methylation plays a role in viral genome replication.</text>
</comment>
<comment type="RNA editing">
    <location>
        <position position="196" evidence="6"/>
    </location>
    <text evidence="1">Partially edited. RNA editing at this position occurs on the antigenomic strand and consists of a conversion of A to G catalyzed by the cellular enzyme ADAR1. The unedited RNA version gives rise to the small delta antigen, which ends with a nonsense codon at position 194. In the edited version, this amber codon is modified to a tryptophan codon and gives rise to the large delta antigen protein (AC P0C6M8). S-HDAg suppresses editing of non-replicating antigenomic RNA, thereby regulating the extent of editing (By similarity).</text>
</comment>
<comment type="miscellaneous">
    <text>This strain belongs to the genotype III found only among cases in South America and which causes a more severe form of infection than genotypes I and II.</text>
</comment>
<comment type="similarity">
    <text evidence="7">Belongs to the hepatitis delta antigen family.</text>
</comment>
<proteinExistence type="inferred from homology"/>